<sequence length="411" mass="46290">MLNILPFFLFFLPFLIGNNRICVAVKTGFVGRNGTQFVLNGEQVYLNGFNAYWMMTTAADTASKGRATVTTALRQASAVGMNVARIWGFNEGDYIPLQISPGSYSEDVFKGLDFVVYEAGRFNIKLIISLVNNFEDYGGRKKYVEWAGLDEPDEFYTNSAVKQFYKNHVKTVLTRKNTITGRMYKDDPTIFSWELINEPRCNDSTASNILQDWVKEMASYVKSIDSNHLLEIGLEGFYGESIPERTVYNPGGRVLTGTDFITNNQIPDIDFATIHIYPDSWLPLQSSRTGEQDTFVDRWIGAHIEDCDNIIKKPLLITEFGKSSKYPGFSLEKRNKFFQRVYDVIYDSARAGGSCTGGVFWQLTTNRTGLLGDGYEVFMQAGPNTTAQLIADQSSKLKNLKYPPLVTHSAE</sequence>
<organism>
    <name type="scientific">Arabidopsis thaliana</name>
    <name type="common">Mouse-ear cress</name>
    <dbReference type="NCBI Taxonomy" id="3702"/>
    <lineage>
        <taxon>Eukaryota</taxon>
        <taxon>Viridiplantae</taxon>
        <taxon>Streptophyta</taxon>
        <taxon>Embryophyta</taxon>
        <taxon>Tracheophyta</taxon>
        <taxon>Spermatophyta</taxon>
        <taxon>Magnoliopsida</taxon>
        <taxon>eudicotyledons</taxon>
        <taxon>Gunneridae</taxon>
        <taxon>Pentapetalae</taxon>
        <taxon>rosids</taxon>
        <taxon>malvids</taxon>
        <taxon>Brassicales</taxon>
        <taxon>Brassicaceae</taxon>
        <taxon>Camelineae</taxon>
        <taxon>Arabidopsis</taxon>
    </lineage>
</organism>
<proteinExistence type="evidence at transcript level"/>
<evidence type="ECO:0000250" key="1">
    <source>
        <dbReference type="UniProtKB" id="B4XC07"/>
    </source>
</evidence>
<evidence type="ECO:0000250" key="2">
    <source>
        <dbReference type="UniProtKB" id="Q99036"/>
    </source>
</evidence>
<evidence type="ECO:0000255" key="3"/>
<evidence type="ECO:0000269" key="4">
    <source>
    </source>
</evidence>
<evidence type="ECO:0000305" key="5"/>
<keyword id="KW-0325">Glycoprotein</keyword>
<keyword id="KW-0326">Glycosidase</keyword>
<keyword id="KW-0378">Hydrolase</keyword>
<keyword id="KW-1185">Reference proteome</keyword>
<keyword id="KW-0964">Secreted</keyword>
<keyword id="KW-0732">Signal</keyword>
<name>MAN1_ARATH</name>
<dbReference type="EC" id="3.2.1.78"/>
<dbReference type="EMBL" id="AC064879">
    <property type="protein sequence ID" value="AAG00883.1"/>
    <property type="molecule type" value="Genomic_DNA"/>
</dbReference>
<dbReference type="EMBL" id="CP002684">
    <property type="protein sequence ID" value="AEE27414.1"/>
    <property type="molecule type" value="Genomic_DNA"/>
</dbReference>
<dbReference type="EMBL" id="AY081352">
    <property type="protein sequence ID" value="AAL91241.1"/>
    <property type="molecule type" value="mRNA"/>
</dbReference>
<dbReference type="EMBL" id="BT002154">
    <property type="protein sequence ID" value="AAN72165.1"/>
    <property type="molecule type" value="mRNA"/>
</dbReference>
<dbReference type="PIR" id="D86153">
    <property type="entry name" value="D86153"/>
</dbReference>
<dbReference type="RefSeq" id="NP_171733.2">
    <property type="nucleotide sequence ID" value="NM_100112.3"/>
</dbReference>
<dbReference type="SMR" id="Q9FZ29"/>
<dbReference type="FunCoup" id="Q9FZ29">
    <property type="interactions" value="62"/>
</dbReference>
<dbReference type="STRING" id="3702.Q9FZ29"/>
<dbReference type="CAZy" id="GH5">
    <property type="family name" value="Glycoside Hydrolase Family 5"/>
</dbReference>
<dbReference type="GlyCosmos" id="Q9FZ29">
    <property type="glycosylation" value="4 sites, No reported glycans"/>
</dbReference>
<dbReference type="GlyGen" id="Q9FZ29">
    <property type="glycosylation" value="4 sites"/>
</dbReference>
<dbReference type="PaxDb" id="3702-AT1G02310.1"/>
<dbReference type="ProteomicsDB" id="238552"/>
<dbReference type="EnsemblPlants" id="AT1G02310.1">
    <property type="protein sequence ID" value="AT1G02310.1"/>
    <property type="gene ID" value="AT1G02310"/>
</dbReference>
<dbReference type="GeneID" id="839444"/>
<dbReference type="Gramene" id="AT1G02310.1">
    <property type="protein sequence ID" value="AT1G02310.1"/>
    <property type="gene ID" value="AT1G02310"/>
</dbReference>
<dbReference type="KEGG" id="ath:AT1G02310"/>
<dbReference type="Araport" id="AT1G02310"/>
<dbReference type="TAIR" id="AT1G02310">
    <property type="gene designation" value="MAN1"/>
</dbReference>
<dbReference type="eggNOG" id="ENOG502QS4Q">
    <property type="taxonomic scope" value="Eukaryota"/>
</dbReference>
<dbReference type="HOGENOM" id="CLU_031603_0_0_1"/>
<dbReference type="InParanoid" id="Q9FZ29"/>
<dbReference type="PhylomeDB" id="Q9FZ29"/>
<dbReference type="PRO" id="PR:Q9FZ29"/>
<dbReference type="Proteomes" id="UP000006548">
    <property type="component" value="Chromosome 1"/>
</dbReference>
<dbReference type="ExpressionAtlas" id="Q9FZ29">
    <property type="expression patterns" value="baseline and differential"/>
</dbReference>
<dbReference type="GO" id="GO:0005576">
    <property type="term" value="C:extracellular region"/>
    <property type="evidence" value="ECO:0007669"/>
    <property type="project" value="UniProtKB-SubCell"/>
</dbReference>
<dbReference type="GO" id="GO:0016985">
    <property type="term" value="F:mannan endo-1,4-beta-mannosidase activity"/>
    <property type="evidence" value="ECO:0007669"/>
    <property type="project" value="UniProtKB-EC"/>
</dbReference>
<dbReference type="GO" id="GO:0000272">
    <property type="term" value="P:polysaccharide catabolic process"/>
    <property type="evidence" value="ECO:0007669"/>
    <property type="project" value="InterPro"/>
</dbReference>
<dbReference type="FunFam" id="3.20.20.80:FF:000012">
    <property type="entry name" value="Mannan endo-1,4-beta-mannosidase 6"/>
    <property type="match status" value="1"/>
</dbReference>
<dbReference type="Gene3D" id="3.20.20.80">
    <property type="entry name" value="Glycosidases"/>
    <property type="match status" value="1"/>
</dbReference>
<dbReference type="InterPro" id="IPR001547">
    <property type="entry name" value="Glyco_hydro_5"/>
</dbReference>
<dbReference type="InterPro" id="IPR017853">
    <property type="entry name" value="Glycoside_hydrolase_SF"/>
</dbReference>
<dbReference type="InterPro" id="IPR045053">
    <property type="entry name" value="MAN-like"/>
</dbReference>
<dbReference type="PANTHER" id="PTHR31451">
    <property type="match status" value="1"/>
</dbReference>
<dbReference type="PANTHER" id="PTHR31451:SF39">
    <property type="entry name" value="MANNAN ENDO-1,4-BETA-MANNOSIDASE 1"/>
    <property type="match status" value="1"/>
</dbReference>
<dbReference type="Pfam" id="PF00150">
    <property type="entry name" value="Cellulase"/>
    <property type="match status" value="1"/>
</dbReference>
<dbReference type="SUPFAM" id="SSF51445">
    <property type="entry name" value="(Trans)glycosidases"/>
    <property type="match status" value="1"/>
</dbReference>
<accession>Q9FZ29</accession>
<reference key="1">
    <citation type="journal article" date="2000" name="Nature">
        <title>Sequence and analysis of chromosome 1 of the plant Arabidopsis thaliana.</title>
        <authorList>
            <person name="Theologis A."/>
            <person name="Ecker J.R."/>
            <person name="Palm C.J."/>
            <person name="Federspiel N.A."/>
            <person name="Kaul S."/>
            <person name="White O."/>
            <person name="Alonso J."/>
            <person name="Altafi H."/>
            <person name="Araujo R."/>
            <person name="Bowman C.L."/>
            <person name="Brooks S.Y."/>
            <person name="Buehler E."/>
            <person name="Chan A."/>
            <person name="Chao Q."/>
            <person name="Chen H."/>
            <person name="Cheuk R.F."/>
            <person name="Chin C.W."/>
            <person name="Chung M.K."/>
            <person name="Conn L."/>
            <person name="Conway A.B."/>
            <person name="Conway A.R."/>
            <person name="Creasy T.H."/>
            <person name="Dewar K."/>
            <person name="Dunn P."/>
            <person name="Etgu P."/>
            <person name="Feldblyum T.V."/>
            <person name="Feng J.-D."/>
            <person name="Fong B."/>
            <person name="Fujii C.Y."/>
            <person name="Gill J.E."/>
            <person name="Goldsmith A.D."/>
            <person name="Haas B."/>
            <person name="Hansen N.F."/>
            <person name="Hughes B."/>
            <person name="Huizar L."/>
            <person name="Hunter J.L."/>
            <person name="Jenkins J."/>
            <person name="Johnson-Hopson C."/>
            <person name="Khan S."/>
            <person name="Khaykin E."/>
            <person name="Kim C.J."/>
            <person name="Koo H.L."/>
            <person name="Kremenetskaia I."/>
            <person name="Kurtz D.B."/>
            <person name="Kwan A."/>
            <person name="Lam B."/>
            <person name="Langin-Hooper S."/>
            <person name="Lee A."/>
            <person name="Lee J.M."/>
            <person name="Lenz C.A."/>
            <person name="Li J.H."/>
            <person name="Li Y.-P."/>
            <person name="Lin X."/>
            <person name="Liu S.X."/>
            <person name="Liu Z.A."/>
            <person name="Luros J.S."/>
            <person name="Maiti R."/>
            <person name="Marziali A."/>
            <person name="Militscher J."/>
            <person name="Miranda M."/>
            <person name="Nguyen M."/>
            <person name="Nierman W.C."/>
            <person name="Osborne B.I."/>
            <person name="Pai G."/>
            <person name="Peterson J."/>
            <person name="Pham P.K."/>
            <person name="Rizzo M."/>
            <person name="Rooney T."/>
            <person name="Rowley D."/>
            <person name="Sakano H."/>
            <person name="Salzberg S.L."/>
            <person name="Schwartz J.R."/>
            <person name="Shinn P."/>
            <person name="Southwick A.M."/>
            <person name="Sun H."/>
            <person name="Tallon L.J."/>
            <person name="Tambunga G."/>
            <person name="Toriumi M.J."/>
            <person name="Town C.D."/>
            <person name="Utterback T."/>
            <person name="Van Aken S."/>
            <person name="Vaysberg M."/>
            <person name="Vysotskaia V.S."/>
            <person name="Walker M."/>
            <person name="Wu D."/>
            <person name="Yu G."/>
            <person name="Fraser C.M."/>
            <person name="Venter J.C."/>
            <person name="Davis R.W."/>
        </authorList>
    </citation>
    <scope>NUCLEOTIDE SEQUENCE [LARGE SCALE GENOMIC DNA]</scope>
    <source>
        <strain>cv. Columbia</strain>
    </source>
</reference>
<reference key="2">
    <citation type="journal article" date="2017" name="Plant J.">
        <title>Araport11: a complete reannotation of the Arabidopsis thaliana reference genome.</title>
        <authorList>
            <person name="Cheng C.Y."/>
            <person name="Krishnakumar V."/>
            <person name="Chan A.P."/>
            <person name="Thibaud-Nissen F."/>
            <person name="Schobel S."/>
            <person name="Town C.D."/>
        </authorList>
    </citation>
    <scope>GENOME REANNOTATION</scope>
    <source>
        <strain>cv. Columbia</strain>
    </source>
</reference>
<reference key="3">
    <citation type="journal article" date="2003" name="Science">
        <title>Empirical analysis of transcriptional activity in the Arabidopsis genome.</title>
        <authorList>
            <person name="Yamada K."/>
            <person name="Lim J."/>
            <person name="Dale J.M."/>
            <person name="Chen H."/>
            <person name="Shinn P."/>
            <person name="Palm C.J."/>
            <person name="Southwick A.M."/>
            <person name="Wu H.C."/>
            <person name="Kim C.J."/>
            <person name="Nguyen M."/>
            <person name="Pham P.K."/>
            <person name="Cheuk R.F."/>
            <person name="Karlin-Newmann G."/>
            <person name="Liu S.X."/>
            <person name="Lam B."/>
            <person name="Sakano H."/>
            <person name="Wu T."/>
            <person name="Yu G."/>
            <person name="Miranda M."/>
            <person name="Quach H.L."/>
            <person name="Tripp M."/>
            <person name="Chang C.H."/>
            <person name="Lee J.M."/>
            <person name="Toriumi M.J."/>
            <person name="Chan M.M."/>
            <person name="Tang C.C."/>
            <person name="Onodera C.S."/>
            <person name="Deng J.M."/>
            <person name="Akiyama K."/>
            <person name="Ansari Y."/>
            <person name="Arakawa T."/>
            <person name="Banh J."/>
            <person name="Banno F."/>
            <person name="Bowser L."/>
            <person name="Brooks S.Y."/>
            <person name="Carninci P."/>
            <person name="Chao Q."/>
            <person name="Choy N."/>
            <person name="Enju A."/>
            <person name="Goldsmith A.D."/>
            <person name="Gurjal M."/>
            <person name="Hansen N.F."/>
            <person name="Hayashizaki Y."/>
            <person name="Johnson-Hopson C."/>
            <person name="Hsuan V.W."/>
            <person name="Iida K."/>
            <person name="Karnes M."/>
            <person name="Khan S."/>
            <person name="Koesema E."/>
            <person name="Ishida J."/>
            <person name="Jiang P.X."/>
            <person name="Jones T."/>
            <person name="Kawai J."/>
            <person name="Kamiya A."/>
            <person name="Meyers C."/>
            <person name="Nakajima M."/>
            <person name="Narusaka M."/>
            <person name="Seki M."/>
            <person name="Sakurai T."/>
            <person name="Satou M."/>
            <person name="Tamse R."/>
            <person name="Vaysberg M."/>
            <person name="Wallender E.K."/>
            <person name="Wong C."/>
            <person name="Yamamura Y."/>
            <person name="Yuan S."/>
            <person name="Shinozaki K."/>
            <person name="Davis R.W."/>
            <person name="Theologis A."/>
            <person name="Ecker J.R."/>
        </authorList>
    </citation>
    <scope>NUCLEOTIDE SEQUENCE [LARGE SCALE MRNA]</scope>
    <source>
        <strain>cv. Columbia</strain>
    </source>
</reference>
<reference key="4">
    <citation type="journal article" date="2007" name="Funct. Integr. Genomics">
        <title>The endo-beta-mannanase gene families in Arabidopsis, rice, and poplar.</title>
        <authorList>
            <person name="Yuan J.S."/>
            <person name="Yang X."/>
            <person name="Lai J."/>
            <person name="Lin H."/>
            <person name="Cheng Z.-M."/>
            <person name="Nonogaki H."/>
            <person name="Chen F."/>
        </authorList>
    </citation>
    <scope>GENE FAMILY</scope>
    <scope>TISSUE SPECIFICITY</scope>
</reference>
<gene>
    <name type="primary">MAN1</name>
    <name type="ordered locus">At1g02310</name>
    <name type="ORF">T6A9.1</name>
</gene>
<protein>
    <recommendedName>
        <fullName>Mannan endo-1,4-beta-mannosidase 1</fullName>
        <ecNumber>3.2.1.78</ecNumber>
    </recommendedName>
    <alternativeName>
        <fullName>Beta-mannanase 1</fullName>
    </alternativeName>
    <alternativeName>
        <fullName>Endo-beta-1,4-mannanase 1</fullName>
        <shortName>AtMAN1</shortName>
    </alternativeName>
</protein>
<feature type="signal peptide" evidence="3">
    <location>
        <begin position="1"/>
        <end position="17"/>
    </location>
</feature>
<feature type="chain" id="PRO_0000277474" description="Mannan endo-1,4-beta-mannosidase 1">
    <location>
        <begin position="18"/>
        <end position="411"/>
    </location>
</feature>
<feature type="active site" description="Proton donor" evidence="2">
    <location>
        <position position="198"/>
    </location>
</feature>
<feature type="active site" description="Nucleophile" evidence="2">
    <location>
        <position position="319"/>
    </location>
</feature>
<feature type="binding site" evidence="1">
    <location>
        <position position="87"/>
    </location>
    <ligand>
        <name>substrate</name>
    </ligand>
</feature>
<feature type="binding site" evidence="1">
    <location>
        <position position="197"/>
    </location>
    <ligand>
        <name>substrate</name>
    </ligand>
</feature>
<feature type="binding site" evidence="1">
    <location>
        <position position="277"/>
    </location>
    <ligand>
        <name>substrate</name>
    </ligand>
</feature>
<feature type="binding site" evidence="1">
    <location>
        <position position="361"/>
    </location>
    <ligand>
        <name>substrate</name>
    </ligand>
</feature>
<feature type="glycosylation site" description="N-linked (GlcNAc...) asparagine" evidence="3">
    <location>
        <position position="33"/>
    </location>
</feature>
<feature type="glycosylation site" description="N-linked (GlcNAc...) asparagine" evidence="3">
    <location>
        <position position="202"/>
    </location>
</feature>
<feature type="glycosylation site" description="N-linked (GlcNAc...) asparagine" evidence="3">
    <location>
        <position position="366"/>
    </location>
</feature>
<feature type="glycosylation site" description="N-linked (GlcNAc...) asparagine" evidence="3">
    <location>
        <position position="384"/>
    </location>
</feature>
<comment type="catalytic activity">
    <reaction>
        <text>Random hydrolysis of (1-&gt;4)-beta-D-mannosidic linkages in mannans, galactomannans and glucomannans.</text>
        <dbReference type="EC" id="3.2.1.78"/>
    </reaction>
</comment>
<comment type="subcellular location">
    <subcellularLocation>
        <location evidence="5">Secreted</location>
    </subcellularLocation>
</comment>
<comment type="tissue specificity">
    <text evidence="4">Expressed in roots, stems and flowers.</text>
</comment>
<comment type="similarity">
    <text evidence="5">Belongs to the glycosyl hydrolase 5 (cellulase A) family.</text>
</comment>